<sequence>MFPLGSVVEVITGERGFVRYAGEVENRKGVYVGLELLPEFAEFGKNRGVVDGREYFKTKNNEKTGIFVPFDKCKLASSISSSPSPKIDGTAASIGMGFPPMSPNLQSSIPRLTNVSSSSNLSMNTISSTALTPTEKILQKRIEDLLYERQNHQQQLEEVLATVDQLQSLVTNFNDQQDEVDELRERITLKEERIQQMRNEASQRRFEFKTTIECLEESSNRAIETYENRIAELEAQLEMYMSGKSEDDLLFSLQQERDYALNQVEILQERVDTLMKQKANSSTANEKLSHMESSSPTLTNASFESPKRGKGSNDLPENHPQRRQTLEFYEIEIEVLREKVEKLQALSDEKDFYISKLEKSLDRNDTTPVPSDEKLSNYAAEKENLVSRISELEHTIEQLTINNERDNERMSPAEFELETTQEVEENDSDSHDDEETWCEVCETNNHSLQECPTVFGSTDEA</sequence>
<organism>
    <name type="scientific">Schizosaccharomyces pombe (strain 972 / ATCC 24843)</name>
    <name type="common">Fission yeast</name>
    <dbReference type="NCBI Taxonomy" id="284812"/>
    <lineage>
        <taxon>Eukaryota</taxon>
        <taxon>Fungi</taxon>
        <taxon>Dikarya</taxon>
        <taxon>Ascomycota</taxon>
        <taxon>Taphrinomycotina</taxon>
        <taxon>Schizosaccharomycetes</taxon>
        <taxon>Schizosaccharomycetales</taxon>
        <taxon>Schizosaccharomycetaceae</taxon>
        <taxon>Schizosaccharomyces</taxon>
    </lineage>
</organism>
<proteinExistence type="evidence at protein level"/>
<reference key="1">
    <citation type="journal article" date="1998" name="Biochim. Biophys. Acta">
        <title>A Schizosaccharomyces pombe gene encoding a novel polypeptide with a predicted alpha-helical rod structure found in the myosin and intermediate-filament families of proteins.</title>
        <authorList>
            <person name="Jannatipour M."/>
            <person name="Rokeach L.A."/>
        </authorList>
    </citation>
    <scope>NUCLEOTIDE SEQUENCE [MRNA]</scope>
    <scope>SUBUNIT</scope>
</reference>
<reference key="2">
    <citation type="journal article" date="2000" name="Cell">
        <title>CLIP170-like tip1p spatially organizes microtubular dynamics in fission yeast.</title>
        <authorList>
            <person name="Brunner D."/>
            <person name="Nurse P."/>
        </authorList>
    </citation>
    <scope>NUCLEOTIDE SEQUENCE [MRNA]</scope>
    <scope>FUNCTION</scope>
    <scope>SUBCELLULAR LOCATION</scope>
</reference>
<reference key="3">
    <citation type="journal article" date="2002" name="Nature">
        <title>The genome sequence of Schizosaccharomyces pombe.</title>
        <authorList>
            <person name="Wood V."/>
            <person name="Gwilliam R."/>
            <person name="Rajandream M.A."/>
            <person name="Lyne M.H."/>
            <person name="Lyne R."/>
            <person name="Stewart A."/>
            <person name="Sgouros J.G."/>
            <person name="Peat N."/>
            <person name="Hayles J."/>
            <person name="Baker S.G."/>
            <person name="Basham D."/>
            <person name="Bowman S."/>
            <person name="Brooks K."/>
            <person name="Brown D."/>
            <person name="Brown S."/>
            <person name="Chillingworth T."/>
            <person name="Churcher C.M."/>
            <person name="Collins M."/>
            <person name="Connor R."/>
            <person name="Cronin A."/>
            <person name="Davis P."/>
            <person name="Feltwell T."/>
            <person name="Fraser A."/>
            <person name="Gentles S."/>
            <person name="Goble A."/>
            <person name="Hamlin N."/>
            <person name="Harris D.E."/>
            <person name="Hidalgo J."/>
            <person name="Hodgson G."/>
            <person name="Holroyd S."/>
            <person name="Hornsby T."/>
            <person name="Howarth S."/>
            <person name="Huckle E.J."/>
            <person name="Hunt S."/>
            <person name="Jagels K."/>
            <person name="James K.D."/>
            <person name="Jones L."/>
            <person name="Jones M."/>
            <person name="Leather S."/>
            <person name="McDonald S."/>
            <person name="McLean J."/>
            <person name="Mooney P."/>
            <person name="Moule S."/>
            <person name="Mungall K.L."/>
            <person name="Murphy L.D."/>
            <person name="Niblett D."/>
            <person name="Odell C."/>
            <person name="Oliver K."/>
            <person name="O'Neil S."/>
            <person name="Pearson D."/>
            <person name="Quail M.A."/>
            <person name="Rabbinowitsch E."/>
            <person name="Rutherford K.M."/>
            <person name="Rutter S."/>
            <person name="Saunders D."/>
            <person name="Seeger K."/>
            <person name="Sharp S."/>
            <person name="Skelton J."/>
            <person name="Simmonds M.N."/>
            <person name="Squares R."/>
            <person name="Squares S."/>
            <person name="Stevens K."/>
            <person name="Taylor K."/>
            <person name="Taylor R.G."/>
            <person name="Tivey A."/>
            <person name="Walsh S.V."/>
            <person name="Warren T."/>
            <person name="Whitehead S."/>
            <person name="Woodward J.R."/>
            <person name="Volckaert G."/>
            <person name="Aert R."/>
            <person name="Robben J."/>
            <person name="Grymonprez B."/>
            <person name="Weltjens I."/>
            <person name="Vanstreels E."/>
            <person name="Rieger M."/>
            <person name="Schaefer M."/>
            <person name="Mueller-Auer S."/>
            <person name="Gabel C."/>
            <person name="Fuchs M."/>
            <person name="Duesterhoeft A."/>
            <person name="Fritzc C."/>
            <person name="Holzer E."/>
            <person name="Moestl D."/>
            <person name="Hilbert H."/>
            <person name="Borzym K."/>
            <person name="Langer I."/>
            <person name="Beck A."/>
            <person name="Lehrach H."/>
            <person name="Reinhardt R."/>
            <person name="Pohl T.M."/>
            <person name="Eger P."/>
            <person name="Zimmermann W."/>
            <person name="Wedler H."/>
            <person name="Wambutt R."/>
            <person name="Purnelle B."/>
            <person name="Goffeau A."/>
            <person name="Cadieu E."/>
            <person name="Dreano S."/>
            <person name="Gloux S."/>
            <person name="Lelaure V."/>
            <person name="Mottier S."/>
            <person name="Galibert F."/>
            <person name="Aves S.J."/>
            <person name="Xiang Z."/>
            <person name="Hunt C."/>
            <person name="Moore K."/>
            <person name="Hurst S.M."/>
            <person name="Lucas M."/>
            <person name="Rochet M."/>
            <person name="Gaillardin C."/>
            <person name="Tallada V.A."/>
            <person name="Garzon A."/>
            <person name="Thode G."/>
            <person name="Daga R.R."/>
            <person name="Cruzado L."/>
            <person name="Jimenez J."/>
            <person name="Sanchez M."/>
            <person name="del Rey F."/>
            <person name="Benito J."/>
            <person name="Dominguez A."/>
            <person name="Revuelta J.L."/>
            <person name="Moreno S."/>
            <person name="Armstrong J."/>
            <person name="Forsburg S.L."/>
            <person name="Cerutti L."/>
            <person name="Lowe T."/>
            <person name="McCombie W.R."/>
            <person name="Paulsen I."/>
            <person name="Potashkin J."/>
            <person name="Shpakovski G.V."/>
            <person name="Ussery D."/>
            <person name="Barrell B.G."/>
            <person name="Nurse P."/>
        </authorList>
    </citation>
    <scope>NUCLEOTIDE SEQUENCE [LARGE SCALE GENOMIC DNA]</scope>
    <source>
        <strain>972 / ATCC 24843</strain>
    </source>
</reference>
<reference key="4">
    <citation type="journal article" date="2004" name="Dev. Cell">
        <title>Tea2p kinesin is involved in spatial microtubule organization by transporting tip1p on microtubules.</title>
        <authorList>
            <person name="Busch K.E."/>
            <person name="Hayles J."/>
            <person name="Nurse P."/>
            <person name="Brunner D."/>
        </authorList>
    </citation>
    <scope>FUNCTION</scope>
    <scope>INTERACTION WITH TEA2</scope>
    <scope>SUBCELLULAR LOCATION</scope>
</reference>
<reference key="5">
    <citation type="journal article" date="2005" name="Dev. Cell">
        <title>Tea4p links microtubule plus ends with the formin for3p in the establishment of cell polarity.</title>
        <authorList>
            <person name="Martin S.G."/>
            <person name="McDonald W.H."/>
            <person name="Yates J.R. III"/>
            <person name="Chang F."/>
        </authorList>
    </citation>
    <scope>INTERACTION WITH TEA1 AND TEA4</scope>
</reference>
<reference key="6">
    <citation type="journal article" date="2008" name="J. Proteome Res.">
        <title>Phosphoproteome analysis of fission yeast.</title>
        <authorList>
            <person name="Wilson-Grady J.T."/>
            <person name="Villen J."/>
            <person name="Gygi S.P."/>
        </authorList>
    </citation>
    <scope>PHOSPHORYLATION [LARGE SCALE ANALYSIS] AT SER-82; SER-84; SER-289; SER-294; SER-305 AND THR-367</scope>
    <scope>IDENTIFICATION BY MASS SPECTROMETRY</scope>
</reference>
<dbReference type="EMBL" id="U59915">
    <property type="protein sequence ID" value="AAC33366.1"/>
    <property type="molecule type" value="mRNA"/>
</dbReference>
<dbReference type="EMBL" id="CU329670">
    <property type="protein sequence ID" value="CAB16742.1"/>
    <property type="molecule type" value="Genomic_DNA"/>
</dbReference>
<dbReference type="PIR" id="T38698">
    <property type="entry name" value="T38698"/>
</dbReference>
<dbReference type="RefSeq" id="NP_593613.1">
    <property type="nucleotide sequence ID" value="NM_001019044.2"/>
</dbReference>
<dbReference type="SMR" id="P79065"/>
<dbReference type="BioGRID" id="279479">
    <property type="interactions" value="113"/>
</dbReference>
<dbReference type="DIP" id="DIP-35371N"/>
<dbReference type="FunCoup" id="P79065">
    <property type="interactions" value="60"/>
</dbReference>
<dbReference type="IntAct" id="P79065">
    <property type="interactions" value="9"/>
</dbReference>
<dbReference type="STRING" id="284812.P79065"/>
<dbReference type="iPTMnet" id="P79065"/>
<dbReference type="PaxDb" id="4896-SPAC3C7.12.1"/>
<dbReference type="EnsemblFungi" id="SPAC3C7.12.1">
    <property type="protein sequence ID" value="SPAC3C7.12.1:pep"/>
    <property type="gene ID" value="SPAC3C7.12"/>
</dbReference>
<dbReference type="GeneID" id="2543044"/>
<dbReference type="KEGG" id="spo:2543044"/>
<dbReference type="PomBase" id="SPAC3C7.12">
    <property type="gene designation" value="tip1"/>
</dbReference>
<dbReference type="VEuPathDB" id="FungiDB:SPAC3C7.12"/>
<dbReference type="eggNOG" id="KOG4568">
    <property type="taxonomic scope" value="Eukaryota"/>
</dbReference>
<dbReference type="HOGENOM" id="CLU_582851_0_0_1"/>
<dbReference type="InParanoid" id="P79065"/>
<dbReference type="OMA" id="YQKKIGC"/>
<dbReference type="PhylomeDB" id="P79065"/>
<dbReference type="CD-CODE" id="9095A454">
    <property type="entry name" value="TIP body"/>
</dbReference>
<dbReference type="PRO" id="PR:P79065"/>
<dbReference type="Proteomes" id="UP000002485">
    <property type="component" value="Chromosome I"/>
</dbReference>
<dbReference type="GO" id="GO:0005938">
    <property type="term" value="C:cell cortex"/>
    <property type="evidence" value="ECO:0000314"/>
    <property type="project" value="PomBase"/>
</dbReference>
<dbReference type="GO" id="GO:0051285">
    <property type="term" value="C:cell cortex of cell tip"/>
    <property type="evidence" value="ECO:0000314"/>
    <property type="project" value="PomBase"/>
</dbReference>
<dbReference type="GO" id="GO:0051286">
    <property type="term" value="C:cell tip"/>
    <property type="evidence" value="ECO:0007005"/>
    <property type="project" value="PomBase"/>
</dbReference>
<dbReference type="GO" id="GO:0005881">
    <property type="term" value="C:cytoplasmic microtubule"/>
    <property type="evidence" value="ECO:0000269"/>
    <property type="project" value="PomBase"/>
</dbReference>
<dbReference type="GO" id="GO:1904511">
    <property type="term" value="C:cytoplasmic microtubule plus-end"/>
    <property type="evidence" value="ECO:0000314"/>
    <property type="project" value="PomBase"/>
</dbReference>
<dbReference type="GO" id="GO:0005829">
    <property type="term" value="C:cytosol"/>
    <property type="evidence" value="ECO:0007005"/>
    <property type="project" value="PomBase"/>
</dbReference>
<dbReference type="GO" id="GO:1990752">
    <property type="term" value="C:microtubule end"/>
    <property type="evidence" value="ECO:0000314"/>
    <property type="project" value="PomBase"/>
</dbReference>
<dbReference type="GO" id="GO:1905721">
    <property type="term" value="C:mitotic spindle astral microtubule end"/>
    <property type="evidence" value="ECO:0000314"/>
    <property type="project" value="PomBase"/>
</dbReference>
<dbReference type="GO" id="GO:1905759">
    <property type="term" value="C:post-anaphase array microtubule"/>
    <property type="evidence" value="ECO:0000314"/>
    <property type="project" value="PomBase"/>
</dbReference>
<dbReference type="GO" id="GO:0008017">
    <property type="term" value="F:microtubule binding"/>
    <property type="evidence" value="ECO:0000314"/>
    <property type="project" value="PomBase"/>
</dbReference>
<dbReference type="GO" id="GO:0051010">
    <property type="term" value="F:microtubule plus-end binding"/>
    <property type="evidence" value="ECO:0000314"/>
    <property type="project" value="PomBase"/>
</dbReference>
<dbReference type="GO" id="GO:0031122">
    <property type="term" value="P:cytoplasmic microtubule organization"/>
    <property type="evidence" value="ECO:0000315"/>
    <property type="project" value="PomBase"/>
</dbReference>
<dbReference type="GO" id="GO:0030010">
    <property type="term" value="P:establishment of cell polarity"/>
    <property type="evidence" value="ECO:0000315"/>
    <property type="project" value="PomBase"/>
</dbReference>
<dbReference type="GO" id="GO:0000132">
    <property type="term" value="P:establishment of mitotic spindle orientation"/>
    <property type="evidence" value="ECO:0000269"/>
    <property type="project" value="PomBase"/>
</dbReference>
<dbReference type="GO" id="GO:0000226">
    <property type="term" value="P:microtubule cytoskeleton organization"/>
    <property type="evidence" value="ECO:0000315"/>
    <property type="project" value="PomBase"/>
</dbReference>
<dbReference type="GO" id="GO:1904518">
    <property type="term" value="P:protein localization to cytoplasmic microtubule plus-end"/>
    <property type="evidence" value="ECO:0000315"/>
    <property type="project" value="PomBase"/>
</dbReference>
<dbReference type="Gene3D" id="2.30.30.190">
    <property type="entry name" value="CAP Gly-rich-like domain"/>
    <property type="match status" value="1"/>
</dbReference>
<dbReference type="InterPro" id="IPR036859">
    <property type="entry name" value="CAP-Gly_dom_sf"/>
</dbReference>
<dbReference type="InterPro" id="IPR000938">
    <property type="entry name" value="CAP-Gly_domain"/>
</dbReference>
<dbReference type="Pfam" id="PF01302">
    <property type="entry name" value="CAP_GLY"/>
    <property type="match status" value="1"/>
</dbReference>
<dbReference type="SMART" id="SM01052">
    <property type="entry name" value="CAP_GLY"/>
    <property type="match status" value="1"/>
</dbReference>
<dbReference type="SUPFAM" id="SSF74924">
    <property type="entry name" value="Cap-Gly domain"/>
    <property type="match status" value="1"/>
</dbReference>
<dbReference type="PROSITE" id="PS00845">
    <property type="entry name" value="CAP_GLY_1"/>
    <property type="match status" value="1"/>
</dbReference>
<dbReference type="PROSITE" id="PS50245">
    <property type="entry name" value="CAP_GLY_2"/>
    <property type="match status" value="1"/>
</dbReference>
<evidence type="ECO:0000255" key="1"/>
<evidence type="ECO:0000255" key="2">
    <source>
        <dbReference type="PROSITE-ProRule" id="PRU00045"/>
    </source>
</evidence>
<evidence type="ECO:0000256" key="3">
    <source>
        <dbReference type="SAM" id="MobiDB-lite"/>
    </source>
</evidence>
<evidence type="ECO:0000269" key="4">
    <source>
    </source>
</evidence>
<evidence type="ECO:0000269" key="5">
    <source>
    </source>
</evidence>
<evidence type="ECO:0000269" key="6">
    <source>
    </source>
</evidence>
<evidence type="ECO:0000269" key="7">
    <source>
    </source>
</evidence>
<evidence type="ECO:0000269" key="8">
    <source>
    </source>
</evidence>
<protein>
    <recommendedName>
        <fullName>Tip elongation protein 1</fullName>
    </recommendedName>
    <alternativeName>
        <fullName>Protein noc1</fullName>
    </alternativeName>
</protein>
<keyword id="KW-0175">Coiled coil</keyword>
<keyword id="KW-0963">Cytoplasm</keyword>
<keyword id="KW-0206">Cytoskeleton</keyword>
<keyword id="KW-0493">Microtubule</keyword>
<keyword id="KW-0597">Phosphoprotein</keyword>
<keyword id="KW-1185">Reference proteome</keyword>
<accession>P79065</accession>
<comment type="function">
    <text evidence="4 5">Has a role in stabilizing and targeting the growing tips of the microtubules along the long axis of the cell, directing them to the ends of the cell. Acts as a cargo for tea2.</text>
</comment>
<comment type="subunit">
    <text evidence="5 6 8">Monomer. Interacts with tea1 and tea2. Interacts with tea4 in the presence of tea1.</text>
</comment>
<comment type="interaction">
    <interactant intactId="EBI-1102463">
        <id>P79065</id>
    </interactant>
    <interactant intactId="EBI-1002268">
        <id>Q10113</id>
        <label>mal3</label>
    </interactant>
    <organismsDiffer>false</organismsDiffer>
    <experiments>3</experiments>
</comment>
<comment type="interaction">
    <interactant intactId="EBI-1102463">
        <id>P79065</id>
    </interactant>
    <interactant intactId="EBI-1112382">
        <id>O42874</id>
        <label>peg1</label>
    </interactant>
    <organismsDiffer>false</organismsDiffer>
    <experiments>4</experiments>
</comment>
<comment type="interaction">
    <interactant intactId="EBI-1102463">
        <id>P79065</id>
    </interactant>
    <interactant intactId="EBI-875376">
        <id>P87061</id>
        <label>tea1</label>
    </interactant>
    <organismsDiffer>false</organismsDiffer>
    <experiments>5</experiments>
</comment>
<comment type="interaction">
    <interactant intactId="EBI-1102463">
        <id>P79065</id>
    </interactant>
    <interactant intactId="EBI-1107767">
        <id>Q1MTQ1</id>
        <label>tea2</label>
    </interactant>
    <organismsDiffer>false</organismsDiffer>
    <experiments>6</experiments>
</comment>
<comment type="subcellular location">
    <subcellularLocation>
        <location evidence="4 5">Cytoplasm</location>
        <location evidence="4 5">Cytoskeleton</location>
    </subcellularLocation>
    <text>Located at the microtubule tips.</text>
</comment>
<gene>
    <name type="primary">tip1</name>
    <name type="synonym">noc1</name>
    <name type="ORF">SPAC3C7.12</name>
</gene>
<name>TIP1_SCHPO</name>
<feature type="chain" id="PRO_0000083544" description="Tip elongation protein 1">
    <location>
        <begin position="1"/>
        <end position="461"/>
    </location>
</feature>
<feature type="domain" description="CAP-Gly" evidence="2">
    <location>
        <begin position="22"/>
        <end position="69"/>
    </location>
</feature>
<feature type="region of interest" description="Disordered" evidence="3">
    <location>
        <begin position="278"/>
        <end position="323"/>
    </location>
</feature>
<feature type="region of interest" description="Disordered" evidence="3">
    <location>
        <begin position="417"/>
        <end position="437"/>
    </location>
</feature>
<feature type="coiled-coil region" evidence="1">
    <location>
        <begin position="134"/>
        <end position="418"/>
    </location>
</feature>
<feature type="compositionally biased region" description="Polar residues" evidence="3">
    <location>
        <begin position="278"/>
        <end position="303"/>
    </location>
</feature>
<feature type="modified residue" description="Phosphoserine" evidence="7">
    <location>
        <position position="82"/>
    </location>
</feature>
<feature type="modified residue" description="Phosphoserine" evidence="7">
    <location>
        <position position="84"/>
    </location>
</feature>
<feature type="modified residue" description="Phosphoserine" evidence="7">
    <location>
        <position position="289"/>
    </location>
</feature>
<feature type="modified residue" description="Phosphoserine" evidence="7">
    <location>
        <position position="294"/>
    </location>
</feature>
<feature type="modified residue" description="Phosphoserine" evidence="7">
    <location>
        <position position="305"/>
    </location>
</feature>
<feature type="modified residue" description="Phosphothreonine" evidence="7">
    <location>
        <position position="367"/>
    </location>
</feature>